<proteinExistence type="inferred from homology"/>
<feature type="chain" id="PRO_0000342240" description="LL-diaminopimelate aminotransferase">
    <location>
        <begin position="1"/>
        <end position="410"/>
    </location>
</feature>
<feature type="binding site" evidence="1">
    <location>
        <position position="15"/>
    </location>
    <ligand>
        <name>substrate</name>
    </ligand>
</feature>
<feature type="binding site" evidence="1">
    <location>
        <position position="42"/>
    </location>
    <ligand>
        <name>substrate</name>
    </ligand>
</feature>
<feature type="binding site" evidence="1">
    <location>
        <position position="72"/>
    </location>
    <ligand>
        <name>pyridoxal 5'-phosphate</name>
        <dbReference type="ChEBI" id="CHEBI:597326"/>
    </ligand>
</feature>
<feature type="binding site" evidence="1">
    <location>
        <begin position="108"/>
        <end position="109"/>
    </location>
    <ligand>
        <name>pyridoxal 5'-phosphate</name>
        <dbReference type="ChEBI" id="CHEBI:597326"/>
    </ligand>
</feature>
<feature type="binding site" evidence="1">
    <location>
        <position position="109"/>
    </location>
    <ligand>
        <name>substrate</name>
    </ligand>
</feature>
<feature type="binding site" evidence="1">
    <location>
        <position position="132"/>
    </location>
    <ligand>
        <name>pyridoxal 5'-phosphate</name>
        <dbReference type="ChEBI" id="CHEBI:597326"/>
    </ligand>
</feature>
<feature type="binding site" evidence="1">
    <location>
        <position position="132"/>
    </location>
    <ligand>
        <name>substrate</name>
    </ligand>
</feature>
<feature type="binding site" evidence="1">
    <location>
        <position position="187"/>
    </location>
    <ligand>
        <name>pyridoxal 5'-phosphate</name>
        <dbReference type="ChEBI" id="CHEBI:597326"/>
    </ligand>
</feature>
<feature type="binding site" evidence="1">
    <location>
        <position position="187"/>
    </location>
    <ligand>
        <name>substrate</name>
    </ligand>
</feature>
<feature type="binding site" evidence="1">
    <location>
        <position position="218"/>
    </location>
    <ligand>
        <name>pyridoxal 5'-phosphate</name>
        <dbReference type="ChEBI" id="CHEBI:597326"/>
    </ligand>
</feature>
<feature type="binding site" evidence="1">
    <location>
        <begin position="246"/>
        <end position="248"/>
    </location>
    <ligand>
        <name>pyridoxal 5'-phosphate</name>
        <dbReference type="ChEBI" id="CHEBI:597326"/>
    </ligand>
</feature>
<feature type="binding site" evidence="1">
    <location>
        <position position="257"/>
    </location>
    <ligand>
        <name>pyridoxal 5'-phosphate</name>
        <dbReference type="ChEBI" id="CHEBI:597326"/>
    </ligand>
</feature>
<feature type="binding site" evidence="1">
    <location>
        <position position="292"/>
    </location>
    <ligand>
        <name>pyridoxal 5'-phosphate</name>
        <dbReference type="ChEBI" id="CHEBI:597326"/>
    </ligand>
</feature>
<feature type="binding site" evidence="1">
    <location>
        <position position="292"/>
    </location>
    <ligand>
        <name>substrate</name>
    </ligand>
</feature>
<feature type="binding site" evidence="1">
    <location>
        <position position="388"/>
    </location>
    <ligand>
        <name>substrate</name>
    </ligand>
</feature>
<feature type="modified residue" description="N6-(pyridoxal phosphate)lysine" evidence="1">
    <location>
        <position position="249"/>
    </location>
</feature>
<organism>
    <name type="scientific">Geotalea uraniireducens (strain Rf4)</name>
    <name type="common">Geobacter uraniireducens</name>
    <dbReference type="NCBI Taxonomy" id="351605"/>
    <lineage>
        <taxon>Bacteria</taxon>
        <taxon>Pseudomonadati</taxon>
        <taxon>Thermodesulfobacteriota</taxon>
        <taxon>Desulfuromonadia</taxon>
        <taxon>Geobacterales</taxon>
        <taxon>Geobacteraceae</taxon>
        <taxon>Geotalea</taxon>
    </lineage>
</organism>
<evidence type="ECO:0000255" key="1">
    <source>
        <dbReference type="HAMAP-Rule" id="MF_01642"/>
    </source>
</evidence>
<dbReference type="EC" id="2.6.1.83" evidence="1"/>
<dbReference type="EMBL" id="CP000698">
    <property type="protein sequence ID" value="ABQ24454.1"/>
    <property type="molecule type" value="Genomic_DNA"/>
</dbReference>
<dbReference type="RefSeq" id="WP_011937183.1">
    <property type="nucleotide sequence ID" value="NC_009483.1"/>
</dbReference>
<dbReference type="SMR" id="A5GD93"/>
<dbReference type="STRING" id="351605.Gura_0238"/>
<dbReference type="KEGG" id="gur:Gura_0238"/>
<dbReference type="HOGENOM" id="CLU_051433_0_0_7"/>
<dbReference type="OrthoDB" id="9804474at2"/>
<dbReference type="UniPathway" id="UPA00034">
    <property type="reaction ID" value="UER00466"/>
</dbReference>
<dbReference type="Proteomes" id="UP000006695">
    <property type="component" value="Chromosome"/>
</dbReference>
<dbReference type="GO" id="GO:0010285">
    <property type="term" value="F:L,L-diaminopimelate aminotransferase activity"/>
    <property type="evidence" value="ECO:0007669"/>
    <property type="project" value="UniProtKB-EC"/>
</dbReference>
<dbReference type="GO" id="GO:0030170">
    <property type="term" value="F:pyridoxal phosphate binding"/>
    <property type="evidence" value="ECO:0007669"/>
    <property type="project" value="InterPro"/>
</dbReference>
<dbReference type="GO" id="GO:0009089">
    <property type="term" value="P:lysine biosynthetic process via diaminopimelate"/>
    <property type="evidence" value="ECO:0007669"/>
    <property type="project" value="UniProtKB-UniPathway"/>
</dbReference>
<dbReference type="CDD" id="cd00609">
    <property type="entry name" value="AAT_like"/>
    <property type="match status" value="1"/>
</dbReference>
<dbReference type="FunFam" id="3.40.640.10:FF:000099">
    <property type="entry name" value="LL-diaminopimelate aminotransferase, chloroplastic"/>
    <property type="match status" value="1"/>
</dbReference>
<dbReference type="Gene3D" id="3.90.1150.10">
    <property type="entry name" value="Aspartate Aminotransferase, domain 1"/>
    <property type="match status" value="1"/>
</dbReference>
<dbReference type="Gene3D" id="3.40.640.10">
    <property type="entry name" value="Type I PLP-dependent aspartate aminotransferase-like (Major domain)"/>
    <property type="match status" value="1"/>
</dbReference>
<dbReference type="HAMAP" id="MF_01642">
    <property type="entry name" value="DapL_aminotrans_1"/>
    <property type="match status" value="1"/>
</dbReference>
<dbReference type="InterPro" id="IPR004839">
    <property type="entry name" value="Aminotransferase_I/II_large"/>
</dbReference>
<dbReference type="InterPro" id="IPR019942">
    <property type="entry name" value="DapL/ALD1"/>
</dbReference>
<dbReference type="InterPro" id="IPR015424">
    <property type="entry name" value="PyrdxlP-dep_Trfase"/>
</dbReference>
<dbReference type="InterPro" id="IPR015421">
    <property type="entry name" value="PyrdxlP-dep_Trfase_major"/>
</dbReference>
<dbReference type="InterPro" id="IPR015422">
    <property type="entry name" value="PyrdxlP-dep_Trfase_small"/>
</dbReference>
<dbReference type="NCBIfam" id="TIGR03542">
    <property type="entry name" value="DAPAT_plant"/>
    <property type="match status" value="1"/>
</dbReference>
<dbReference type="PANTHER" id="PTHR43144">
    <property type="entry name" value="AMINOTRANSFERASE"/>
    <property type="match status" value="1"/>
</dbReference>
<dbReference type="Pfam" id="PF00155">
    <property type="entry name" value="Aminotran_1_2"/>
    <property type="match status" value="1"/>
</dbReference>
<dbReference type="SUPFAM" id="SSF53383">
    <property type="entry name" value="PLP-dependent transferases"/>
    <property type="match status" value="1"/>
</dbReference>
<accession>A5GD93</accession>
<comment type="function">
    <text evidence="1">Involved in the synthesis of meso-diaminopimelate (m-DAP or DL-DAP), required for both lysine and peptidoglycan biosynthesis. Catalyzes the direct conversion of tetrahydrodipicolinate to LL-diaminopimelate.</text>
</comment>
<comment type="catalytic activity">
    <reaction evidence="1">
        <text>(2S,6S)-2,6-diaminopimelate + 2-oxoglutarate = (S)-2,3,4,5-tetrahydrodipicolinate + L-glutamate + H2O + H(+)</text>
        <dbReference type="Rhea" id="RHEA:23988"/>
        <dbReference type="ChEBI" id="CHEBI:15377"/>
        <dbReference type="ChEBI" id="CHEBI:15378"/>
        <dbReference type="ChEBI" id="CHEBI:16810"/>
        <dbReference type="ChEBI" id="CHEBI:16845"/>
        <dbReference type="ChEBI" id="CHEBI:29985"/>
        <dbReference type="ChEBI" id="CHEBI:57609"/>
        <dbReference type="EC" id="2.6.1.83"/>
    </reaction>
</comment>
<comment type="cofactor">
    <cofactor evidence="1">
        <name>pyridoxal 5'-phosphate</name>
        <dbReference type="ChEBI" id="CHEBI:597326"/>
    </cofactor>
</comment>
<comment type="pathway">
    <text evidence="1">Amino-acid biosynthesis; L-lysine biosynthesis via DAP pathway; LL-2,6-diaminopimelate from (S)-tetrahydrodipicolinate (aminotransferase route): step 1/1.</text>
</comment>
<comment type="subunit">
    <text evidence="1">Homodimer.</text>
</comment>
<comment type="similarity">
    <text evidence="1">Belongs to the class-I pyridoxal-phosphate-dependent aminotransferase family. LL-diaminopimelate aminotransferase subfamily.</text>
</comment>
<sequence>MALINDNYLKLKAGYLFPEIGRRVRAFAEANPSAKVIRLGIGDVTRPLAPAVLKAFHAAVDDLGTTDNFAGYGPEQGYDWLINAIIEKSYKPLGVSLKTDEMFISDGSKCDCANILDIFALDNVVAIGDPVYPVYNDTNVMIGRTGEADDKGYYKGIVYMPCNEENHFIPSLPTEKVDIIYLCFPNNPTGTVASRAELKKWVDYANANDAVIFFDAAYEAFITDPEIPHSIYEIEGAKKCAIEFRSFSKTAGFTGVRCGLVVVPEEVMGTTSTGERYSFNKLWLRRTTTKFNGASYPVQRAAEAVYSDEGWKQTKEIIDYYMENARIIREGMKEAGLTVYGGVNAPYIWLKTPAGMTSWDFFDKLLTECNVVGTPGSGFGPSGEGYFRLSAFGHRENVIEAVERIKKNLK</sequence>
<keyword id="KW-0032">Aminotransferase</keyword>
<keyword id="KW-0663">Pyridoxal phosphate</keyword>
<keyword id="KW-1185">Reference proteome</keyword>
<keyword id="KW-0808">Transferase</keyword>
<gene>
    <name evidence="1" type="primary">dapL</name>
    <name type="ordered locus">Gura_0238</name>
</gene>
<protein>
    <recommendedName>
        <fullName evidence="1">LL-diaminopimelate aminotransferase</fullName>
        <shortName evidence="1">DAP-AT</shortName>
        <shortName evidence="1">DAP-aminotransferase</shortName>
        <shortName evidence="1">LL-DAP-aminotransferase</shortName>
        <ecNumber evidence="1">2.6.1.83</ecNumber>
    </recommendedName>
</protein>
<reference key="1">
    <citation type="submission" date="2007-05" db="EMBL/GenBank/DDBJ databases">
        <title>Complete sequence of Geobacter uraniireducens Rf4.</title>
        <authorList>
            <consortium name="US DOE Joint Genome Institute"/>
            <person name="Copeland A."/>
            <person name="Lucas S."/>
            <person name="Lapidus A."/>
            <person name="Barry K."/>
            <person name="Detter J.C."/>
            <person name="Glavina del Rio T."/>
            <person name="Hammon N."/>
            <person name="Israni S."/>
            <person name="Dalin E."/>
            <person name="Tice H."/>
            <person name="Pitluck S."/>
            <person name="Chertkov O."/>
            <person name="Brettin T."/>
            <person name="Bruce D."/>
            <person name="Han C."/>
            <person name="Schmutz J."/>
            <person name="Larimer F."/>
            <person name="Land M."/>
            <person name="Hauser L."/>
            <person name="Kyrpides N."/>
            <person name="Mikhailova N."/>
            <person name="Shelobolina E."/>
            <person name="Aklujkar M."/>
            <person name="Lovley D."/>
            <person name="Richardson P."/>
        </authorList>
    </citation>
    <scope>NUCLEOTIDE SEQUENCE [LARGE SCALE GENOMIC DNA]</scope>
    <source>
        <strain>ATCC BAA-1134 / JCM 13001 / Rf4</strain>
    </source>
</reference>
<name>DAPAT_GEOUR</name>